<reference key="1">
    <citation type="journal article" date="2000" name="Antonie Van Leeuwenhoek">
        <title>Adaptive response to cold temperatures and characterization of cspA in Salmonella typhimurium LT2.</title>
        <authorList>
            <person name="Horton A.J."/>
            <person name="Hak K.M."/>
            <person name="Steffan R.J."/>
            <person name="Foster J.W."/>
            <person name="Bej A.K."/>
        </authorList>
    </citation>
    <scope>NUCLEOTIDE SEQUENCE [GENOMIC DNA]</scope>
    <source>
        <strain>ATCC 19585</strain>
    </source>
</reference>
<reference key="2">
    <citation type="submission" date="1998-03" db="EMBL/GenBank/DDBJ databases">
        <authorList>
            <person name="Tamura N."/>
            <person name="Yu D.T.Y."/>
        </authorList>
    </citation>
    <scope>NUCLEOTIDE SEQUENCE [GENOMIC DNA]</scope>
    <source>
        <strain>3027</strain>
    </source>
</reference>
<reference key="3">
    <citation type="journal article" date="2001" name="Nature">
        <title>Complete genome sequence of Salmonella enterica serovar Typhimurium LT2.</title>
        <authorList>
            <person name="McClelland M."/>
            <person name="Sanderson K.E."/>
            <person name="Spieth J."/>
            <person name="Clifton S.W."/>
            <person name="Latreille P."/>
            <person name="Courtney L."/>
            <person name="Porwollik S."/>
            <person name="Ali J."/>
            <person name="Dante M."/>
            <person name="Du F."/>
            <person name="Hou S."/>
            <person name="Layman D."/>
            <person name="Leonard S."/>
            <person name="Nguyen C."/>
            <person name="Scott K."/>
            <person name="Holmes A."/>
            <person name="Grewal N."/>
            <person name="Mulvaney E."/>
            <person name="Ryan E."/>
            <person name="Sun H."/>
            <person name="Florea L."/>
            <person name="Miller W."/>
            <person name="Stoneking T."/>
            <person name="Nhan M."/>
            <person name="Waterston R."/>
            <person name="Wilson R.K."/>
        </authorList>
    </citation>
    <scope>NUCLEOTIDE SEQUENCE [LARGE SCALE GENOMIC DNA]</scope>
    <source>
        <strain>LT2 / SGSC1412 / ATCC 700720</strain>
    </source>
</reference>
<reference key="4">
    <citation type="journal article" date="1997" name="J. Ind. Microbiol. Biotechnol.">
        <title>Detection and speciation of bacteria through PCR using universal major cold-shock protein primer oligomers.</title>
        <authorList>
            <person name="Francis K.P."/>
            <person name="Stewart G.S.A.B."/>
        </authorList>
    </citation>
    <scope>NUCLEOTIDE SEQUENCE [GENOMIC DNA] OF 15-60</scope>
    <source>
        <strain>LT2</strain>
    </source>
</reference>
<protein>
    <recommendedName>
        <fullName>Cold shock protein CspA</fullName>
        <shortName>CSP-A</shortName>
    </recommendedName>
    <alternativeName>
        <fullName>7.4 kDa cold shock protein</fullName>
    </alternativeName>
    <alternativeName>
        <fullName>CS7.4</fullName>
    </alternativeName>
</protein>
<dbReference type="EMBL" id="L23115">
    <property type="protein sequence ID" value="AAB66357.1"/>
    <property type="molecule type" value="Genomic_DNA"/>
</dbReference>
<dbReference type="EMBL" id="AF052579">
    <property type="protein sequence ID" value="AAC06036.1"/>
    <property type="molecule type" value="Genomic_DNA"/>
</dbReference>
<dbReference type="EMBL" id="AE006468">
    <property type="protein sequence ID" value="AAL22509.1"/>
    <property type="molecule type" value="Genomic_DNA"/>
</dbReference>
<dbReference type="EMBL" id="U60048">
    <property type="protein sequence ID" value="AAC80252.1"/>
    <property type="molecule type" value="Genomic_DNA"/>
</dbReference>
<dbReference type="RefSeq" id="NP_462550.1">
    <property type="nucleotide sequence ID" value="NC_003197.2"/>
</dbReference>
<dbReference type="RefSeq" id="WP_000014594.1">
    <property type="nucleotide sequence ID" value="NC_003197.2"/>
</dbReference>
<dbReference type="BMRB" id="P0A9Y2"/>
<dbReference type="SMR" id="P0A9Y2"/>
<dbReference type="STRING" id="99287.STM3649"/>
<dbReference type="PaxDb" id="99287-STM3649"/>
<dbReference type="GeneID" id="1255173"/>
<dbReference type="GeneID" id="93778287"/>
<dbReference type="KEGG" id="stm:STM3649"/>
<dbReference type="PATRIC" id="fig|99287.12.peg.3860"/>
<dbReference type="HOGENOM" id="CLU_117621_2_1_6"/>
<dbReference type="OMA" id="MDNKSQG"/>
<dbReference type="PhylomeDB" id="P0A9Y2"/>
<dbReference type="BioCyc" id="SENT99287:STM3649-MONOMER"/>
<dbReference type="PRO" id="PR:P0A9Y2"/>
<dbReference type="Proteomes" id="UP000001014">
    <property type="component" value="Chromosome"/>
</dbReference>
<dbReference type="GO" id="GO:0005829">
    <property type="term" value="C:cytosol"/>
    <property type="evidence" value="ECO:0007669"/>
    <property type="project" value="UniProtKB-ARBA"/>
</dbReference>
<dbReference type="GO" id="GO:0003677">
    <property type="term" value="F:DNA binding"/>
    <property type="evidence" value="ECO:0007669"/>
    <property type="project" value="UniProtKB-KW"/>
</dbReference>
<dbReference type="GO" id="GO:0003676">
    <property type="term" value="F:nucleic acid binding"/>
    <property type="evidence" value="ECO:0000318"/>
    <property type="project" value="GO_Central"/>
</dbReference>
<dbReference type="GO" id="GO:0010468">
    <property type="term" value="P:regulation of gene expression"/>
    <property type="evidence" value="ECO:0000318"/>
    <property type="project" value="GO_Central"/>
</dbReference>
<dbReference type="CDD" id="cd04458">
    <property type="entry name" value="CSP_CDS"/>
    <property type="match status" value="1"/>
</dbReference>
<dbReference type="FunFam" id="2.40.50.140:FF:000006">
    <property type="entry name" value="Cold shock protein CspC"/>
    <property type="match status" value="1"/>
</dbReference>
<dbReference type="Gene3D" id="2.40.50.140">
    <property type="entry name" value="Nucleic acid-binding proteins"/>
    <property type="match status" value="1"/>
</dbReference>
<dbReference type="InterPro" id="IPR012156">
    <property type="entry name" value="Cold_shock_CspA"/>
</dbReference>
<dbReference type="InterPro" id="IPR050181">
    <property type="entry name" value="Cold_shock_domain"/>
</dbReference>
<dbReference type="InterPro" id="IPR011129">
    <property type="entry name" value="CSD"/>
</dbReference>
<dbReference type="InterPro" id="IPR019844">
    <property type="entry name" value="CSD_CS"/>
</dbReference>
<dbReference type="InterPro" id="IPR002059">
    <property type="entry name" value="CSP_DNA-bd"/>
</dbReference>
<dbReference type="InterPro" id="IPR012340">
    <property type="entry name" value="NA-bd_OB-fold"/>
</dbReference>
<dbReference type="NCBIfam" id="NF007679">
    <property type="entry name" value="PRK10354.1"/>
    <property type="match status" value="1"/>
</dbReference>
<dbReference type="PANTHER" id="PTHR11544">
    <property type="entry name" value="COLD SHOCK DOMAIN CONTAINING PROTEINS"/>
    <property type="match status" value="1"/>
</dbReference>
<dbReference type="Pfam" id="PF00313">
    <property type="entry name" value="CSD"/>
    <property type="match status" value="1"/>
</dbReference>
<dbReference type="PIRSF" id="PIRSF002599">
    <property type="entry name" value="Cold_shock_A"/>
    <property type="match status" value="1"/>
</dbReference>
<dbReference type="PRINTS" id="PR00050">
    <property type="entry name" value="COLDSHOCK"/>
</dbReference>
<dbReference type="SMART" id="SM00357">
    <property type="entry name" value="CSP"/>
    <property type="match status" value="1"/>
</dbReference>
<dbReference type="SUPFAM" id="SSF50249">
    <property type="entry name" value="Nucleic acid-binding proteins"/>
    <property type="match status" value="1"/>
</dbReference>
<dbReference type="PROSITE" id="PS00352">
    <property type="entry name" value="CSD_1"/>
    <property type="match status" value="1"/>
</dbReference>
<dbReference type="PROSITE" id="PS51857">
    <property type="entry name" value="CSD_2"/>
    <property type="match status" value="1"/>
</dbReference>
<keyword id="KW-0010">Activator</keyword>
<keyword id="KW-0963">Cytoplasm</keyword>
<keyword id="KW-0238">DNA-binding</keyword>
<keyword id="KW-1185">Reference proteome</keyword>
<keyword id="KW-0346">Stress response</keyword>
<keyword id="KW-0804">Transcription</keyword>
<keyword id="KW-0805">Transcription regulation</keyword>
<feature type="initiator methionine" description="Removed" evidence="1">
    <location>
        <position position="1"/>
    </location>
</feature>
<feature type="chain" id="PRO_0000100238" description="Cold shock protein CspA">
    <location>
        <begin position="2"/>
        <end position="70"/>
    </location>
</feature>
<feature type="domain" description="CSD">
    <location>
        <begin position="7"/>
        <end position="67"/>
    </location>
</feature>
<feature type="sequence conflict" description="In Ref. 1; AAB66357." evidence="2" ref="1">
    <original>G</original>
    <variation>A</variation>
    <location>
        <position position="65"/>
    </location>
</feature>
<sequence>MSGKMTGIVKWFNADKGFGFITPDDGSKDVFVHFSAIQNDGYKSLDEGQKVSFTIESGAKGPAAGNVTSL</sequence>
<gene>
    <name type="primary">cspA</name>
    <name type="ordered locus">STM3649</name>
</gene>
<evidence type="ECO:0000250" key="1"/>
<evidence type="ECO:0000305" key="2"/>
<name>CSPA_SALTY</name>
<organism>
    <name type="scientific">Salmonella typhimurium (strain LT2 / SGSC1412 / ATCC 700720)</name>
    <dbReference type="NCBI Taxonomy" id="99287"/>
    <lineage>
        <taxon>Bacteria</taxon>
        <taxon>Pseudomonadati</taxon>
        <taxon>Pseudomonadota</taxon>
        <taxon>Gammaproteobacteria</taxon>
        <taxon>Enterobacterales</taxon>
        <taxon>Enterobacteriaceae</taxon>
        <taxon>Salmonella</taxon>
    </lineage>
</organism>
<proteinExistence type="inferred from homology"/>
<accession>P0A9Y2</accession>
<accession>P15277</accession>
<accession>P37410</accession>
<accession>Q54170</accession>
<comment type="function">
    <text evidence="1">Binds to and stimulates the transcription of the CCAAT-containing, cold-shock-inducible promoters of the H-NS and GyrA proteins. Also binds to the inverted repeat 5'-ATTGG-3' (By similarity).</text>
</comment>
<comment type="subcellular location">
    <subcellularLocation>
        <location evidence="1">Cytoplasm</location>
    </subcellularLocation>
</comment>
<comment type="induction">
    <text evidence="1">In response to low temperature.</text>
</comment>